<organism>
    <name type="scientific">Idiomarina loihiensis (strain ATCC BAA-735 / DSM 15497 / L2-TR)</name>
    <dbReference type="NCBI Taxonomy" id="283942"/>
    <lineage>
        <taxon>Bacteria</taxon>
        <taxon>Pseudomonadati</taxon>
        <taxon>Pseudomonadota</taxon>
        <taxon>Gammaproteobacteria</taxon>
        <taxon>Alteromonadales</taxon>
        <taxon>Idiomarinaceae</taxon>
        <taxon>Idiomarina</taxon>
    </lineage>
</organism>
<accession>Q5R0C5</accession>
<comment type="function">
    <text evidence="1">One of the essential components for the initiation of protein synthesis. Stabilizes the binding of IF-2 and IF-3 on the 30S subunit to which N-formylmethionyl-tRNA(fMet) subsequently binds. Helps modulate mRNA selection, yielding the 30S pre-initiation complex (PIC). Upon addition of the 50S ribosomal subunit IF-1, IF-2 and IF-3 are released leaving the mature 70S translation initiation complex.</text>
</comment>
<comment type="subunit">
    <text evidence="1">Component of the 30S ribosomal translation pre-initiation complex which assembles on the 30S ribosome in the order IF-2 and IF-3, IF-1 and N-formylmethionyl-tRNA(fMet); mRNA recruitment can occur at any time during PIC assembly.</text>
</comment>
<comment type="subcellular location">
    <subcellularLocation>
        <location evidence="1">Cytoplasm</location>
    </subcellularLocation>
</comment>
<comment type="similarity">
    <text evidence="1">Belongs to the IF-1 family.</text>
</comment>
<proteinExistence type="inferred from homology"/>
<gene>
    <name evidence="1" type="primary">infA</name>
    <name type="ordered locus">IL0673</name>
</gene>
<evidence type="ECO:0000255" key="1">
    <source>
        <dbReference type="HAMAP-Rule" id="MF_00075"/>
    </source>
</evidence>
<reference key="1">
    <citation type="journal article" date="2004" name="Proc. Natl. Acad. Sci. U.S.A.">
        <title>Genome sequence of the deep-sea gamma-proteobacterium Idiomarina loihiensis reveals amino acid fermentation as a source of carbon and energy.</title>
        <authorList>
            <person name="Hou S."/>
            <person name="Saw J.H."/>
            <person name="Lee K.S."/>
            <person name="Freitas T.A."/>
            <person name="Belisle C."/>
            <person name="Kawarabayasi Y."/>
            <person name="Donachie S.P."/>
            <person name="Pikina A."/>
            <person name="Galperin M.Y."/>
            <person name="Koonin E.V."/>
            <person name="Makarova K.S."/>
            <person name="Omelchenko M.V."/>
            <person name="Sorokin A."/>
            <person name="Wolf Y.I."/>
            <person name="Li Q.X."/>
            <person name="Keum Y.S."/>
            <person name="Campbell S."/>
            <person name="Denery J."/>
            <person name="Aizawa S."/>
            <person name="Shibata S."/>
            <person name="Malahoff A."/>
            <person name="Alam M."/>
        </authorList>
    </citation>
    <scope>NUCLEOTIDE SEQUENCE [LARGE SCALE GENOMIC DNA]</scope>
    <source>
        <strain>ATCC BAA-735 / DSM 15497 / L2-TR</strain>
    </source>
</reference>
<keyword id="KW-0963">Cytoplasm</keyword>
<keyword id="KW-0396">Initiation factor</keyword>
<keyword id="KW-0648">Protein biosynthesis</keyword>
<keyword id="KW-1185">Reference proteome</keyword>
<keyword id="KW-0694">RNA-binding</keyword>
<keyword id="KW-0699">rRNA-binding</keyword>
<sequence>MAKEDSIEMQGTVLDTLPNTMFRVELENGHVVTAHISGKMRKHYIRILTGDTVTVQLTPYDLTKGRIVFRAR</sequence>
<protein>
    <recommendedName>
        <fullName evidence="1">Translation initiation factor IF-1</fullName>
    </recommendedName>
</protein>
<feature type="chain" id="PRO_0000095801" description="Translation initiation factor IF-1">
    <location>
        <begin position="1"/>
        <end position="72"/>
    </location>
</feature>
<feature type="domain" description="S1-like" evidence="1">
    <location>
        <begin position="1"/>
        <end position="72"/>
    </location>
</feature>
<dbReference type="EMBL" id="AE017340">
    <property type="protein sequence ID" value="AAV81514.1"/>
    <property type="molecule type" value="Genomic_DNA"/>
</dbReference>
<dbReference type="RefSeq" id="WP_008489926.1">
    <property type="nucleotide sequence ID" value="NC_006512.1"/>
</dbReference>
<dbReference type="SMR" id="Q5R0C5"/>
<dbReference type="STRING" id="283942.IL0673"/>
<dbReference type="GeneID" id="41335828"/>
<dbReference type="KEGG" id="ilo:IL0673"/>
<dbReference type="eggNOG" id="COG0361">
    <property type="taxonomic scope" value="Bacteria"/>
</dbReference>
<dbReference type="HOGENOM" id="CLU_151267_1_0_6"/>
<dbReference type="OrthoDB" id="9803250at2"/>
<dbReference type="Proteomes" id="UP000001171">
    <property type="component" value="Chromosome"/>
</dbReference>
<dbReference type="GO" id="GO:0005829">
    <property type="term" value="C:cytosol"/>
    <property type="evidence" value="ECO:0007669"/>
    <property type="project" value="TreeGrafter"/>
</dbReference>
<dbReference type="GO" id="GO:0043022">
    <property type="term" value="F:ribosome binding"/>
    <property type="evidence" value="ECO:0007669"/>
    <property type="project" value="UniProtKB-UniRule"/>
</dbReference>
<dbReference type="GO" id="GO:0019843">
    <property type="term" value="F:rRNA binding"/>
    <property type="evidence" value="ECO:0007669"/>
    <property type="project" value="UniProtKB-UniRule"/>
</dbReference>
<dbReference type="GO" id="GO:0003743">
    <property type="term" value="F:translation initiation factor activity"/>
    <property type="evidence" value="ECO:0007669"/>
    <property type="project" value="UniProtKB-UniRule"/>
</dbReference>
<dbReference type="CDD" id="cd04451">
    <property type="entry name" value="S1_IF1"/>
    <property type="match status" value="1"/>
</dbReference>
<dbReference type="FunFam" id="2.40.50.140:FF:000002">
    <property type="entry name" value="Translation initiation factor IF-1"/>
    <property type="match status" value="1"/>
</dbReference>
<dbReference type="Gene3D" id="2.40.50.140">
    <property type="entry name" value="Nucleic acid-binding proteins"/>
    <property type="match status" value="1"/>
</dbReference>
<dbReference type="HAMAP" id="MF_00075">
    <property type="entry name" value="IF_1"/>
    <property type="match status" value="1"/>
</dbReference>
<dbReference type="InterPro" id="IPR012340">
    <property type="entry name" value="NA-bd_OB-fold"/>
</dbReference>
<dbReference type="InterPro" id="IPR006196">
    <property type="entry name" value="RNA-binding_domain_S1_IF1"/>
</dbReference>
<dbReference type="InterPro" id="IPR003029">
    <property type="entry name" value="S1_domain"/>
</dbReference>
<dbReference type="InterPro" id="IPR004368">
    <property type="entry name" value="TIF_IF1"/>
</dbReference>
<dbReference type="NCBIfam" id="TIGR00008">
    <property type="entry name" value="infA"/>
    <property type="match status" value="1"/>
</dbReference>
<dbReference type="PANTHER" id="PTHR33370">
    <property type="entry name" value="TRANSLATION INITIATION FACTOR IF-1, CHLOROPLASTIC"/>
    <property type="match status" value="1"/>
</dbReference>
<dbReference type="PANTHER" id="PTHR33370:SF1">
    <property type="entry name" value="TRANSLATION INITIATION FACTOR IF-1, CHLOROPLASTIC"/>
    <property type="match status" value="1"/>
</dbReference>
<dbReference type="Pfam" id="PF01176">
    <property type="entry name" value="eIF-1a"/>
    <property type="match status" value="1"/>
</dbReference>
<dbReference type="SMART" id="SM00316">
    <property type="entry name" value="S1"/>
    <property type="match status" value="1"/>
</dbReference>
<dbReference type="SUPFAM" id="SSF50249">
    <property type="entry name" value="Nucleic acid-binding proteins"/>
    <property type="match status" value="1"/>
</dbReference>
<dbReference type="PROSITE" id="PS50832">
    <property type="entry name" value="S1_IF1_TYPE"/>
    <property type="match status" value="1"/>
</dbReference>
<name>IF1_IDILO</name>